<dbReference type="EMBL" id="AF077226">
    <property type="protein sequence ID" value="AAD46074.2"/>
    <property type="molecule type" value="mRNA"/>
</dbReference>
<dbReference type="EMBL" id="AB014536">
    <property type="protein sequence ID" value="BAA31611.2"/>
    <property type="status" value="ALT_INIT"/>
    <property type="molecule type" value="mRNA"/>
</dbReference>
<dbReference type="EMBL" id="AK292912">
    <property type="protein sequence ID" value="BAF85601.1"/>
    <property type="molecule type" value="mRNA"/>
</dbReference>
<dbReference type="EMBL" id="BC036242">
    <property type="protein sequence ID" value="AAH36242.1"/>
    <property type="molecule type" value="mRNA"/>
</dbReference>
<dbReference type="EMBL" id="BC066597">
    <property type="protein sequence ID" value="AAH66597.1"/>
    <property type="molecule type" value="mRNA"/>
</dbReference>
<dbReference type="CCDS" id="CCDS6243.1"/>
<dbReference type="RefSeq" id="NP_003900.1">
    <property type="nucleotide sequence ID" value="NM_003909.5"/>
</dbReference>
<dbReference type="RefSeq" id="XP_005251150.1">
    <property type="nucleotide sequence ID" value="XM_005251093.5"/>
</dbReference>
<dbReference type="RefSeq" id="XP_016869434.1">
    <property type="nucleotide sequence ID" value="XM_017013945.3"/>
</dbReference>
<dbReference type="RefSeq" id="XP_024303090.1">
    <property type="nucleotide sequence ID" value="XM_024447322.2"/>
</dbReference>
<dbReference type="RefSeq" id="XP_047278349.1">
    <property type="nucleotide sequence ID" value="XM_047422393.1"/>
</dbReference>
<dbReference type="RefSeq" id="XP_047278350.1">
    <property type="nucleotide sequence ID" value="XM_047422394.1"/>
</dbReference>
<dbReference type="RefSeq" id="XP_047278351.1">
    <property type="nucleotide sequence ID" value="XM_047422395.1"/>
</dbReference>
<dbReference type="RefSeq" id="XP_054217423.1">
    <property type="nucleotide sequence ID" value="XM_054361448.1"/>
</dbReference>
<dbReference type="RefSeq" id="XP_054217424.1">
    <property type="nucleotide sequence ID" value="XM_054361449.1"/>
</dbReference>
<dbReference type="RefSeq" id="XP_054217425.1">
    <property type="nucleotide sequence ID" value="XM_054361450.1"/>
</dbReference>
<dbReference type="RefSeq" id="XP_054217426.1">
    <property type="nucleotide sequence ID" value="XM_054361451.1"/>
</dbReference>
<dbReference type="RefSeq" id="XP_054217427.1">
    <property type="nucleotide sequence ID" value="XM_054361452.1"/>
</dbReference>
<dbReference type="RefSeq" id="XP_054217428.1">
    <property type="nucleotide sequence ID" value="XM_054361453.1"/>
</dbReference>
<dbReference type="SMR" id="O75131"/>
<dbReference type="BioGRID" id="114412">
    <property type="interactions" value="122"/>
</dbReference>
<dbReference type="FunCoup" id="O75131">
    <property type="interactions" value="1341"/>
</dbReference>
<dbReference type="IntAct" id="O75131">
    <property type="interactions" value="34"/>
</dbReference>
<dbReference type="MINT" id="O75131"/>
<dbReference type="STRING" id="9606.ENSP00000477590"/>
<dbReference type="TCDB" id="8.A.210.1.2">
    <property type="family name" value="the plasma membrane repair (pmr) family"/>
</dbReference>
<dbReference type="GlyCosmos" id="O75131">
    <property type="glycosylation" value="1 site, 1 glycan"/>
</dbReference>
<dbReference type="GlyGen" id="O75131">
    <property type="glycosylation" value="2 sites, 1 N-linked glycan (1 site), 1 O-linked glycan (1 site)"/>
</dbReference>
<dbReference type="iPTMnet" id="O75131"/>
<dbReference type="MetOSite" id="O75131"/>
<dbReference type="PhosphoSitePlus" id="O75131"/>
<dbReference type="SwissPalm" id="O75131"/>
<dbReference type="BioMuta" id="CPNE3"/>
<dbReference type="jPOST" id="O75131"/>
<dbReference type="MassIVE" id="O75131"/>
<dbReference type="PaxDb" id="9606-ENSP00000477590"/>
<dbReference type="PeptideAtlas" id="O75131"/>
<dbReference type="ProteomicsDB" id="49793"/>
<dbReference type="Pumba" id="O75131"/>
<dbReference type="Antibodypedia" id="25495">
    <property type="antibodies" value="159 antibodies from 29 providers"/>
</dbReference>
<dbReference type="DNASU" id="8895"/>
<dbReference type="Ensembl" id="ENST00000517490.6">
    <property type="protein sequence ID" value="ENSP00000477590.1"/>
    <property type="gene ID" value="ENSG00000085719.13"/>
</dbReference>
<dbReference type="GeneID" id="8895"/>
<dbReference type="KEGG" id="hsa:8895"/>
<dbReference type="MANE-Select" id="ENST00000517490.6">
    <property type="protein sequence ID" value="ENSP00000477590.1"/>
    <property type="RefSeq nucleotide sequence ID" value="NM_003909.5"/>
    <property type="RefSeq protein sequence ID" value="NP_003900.1"/>
</dbReference>
<dbReference type="UCSC" id="uc033bsf.1">
    <property type="organism name" value="human"/>
</dbReference>
<dbReference type="AGR" id="HGNC:2316"/>
<dbReference type="CTD" id="8895"/>
<dbReference type="DisGeNET" id="8895"/>
<dbReference type="GeneCards" id="CPNE3"/>
<dbReference type="HGNC" id="HGNC:2316">
    <property type="gene designation" value="CPNE3"/>
</dbReference>
<dbReference type="HPA" id="ENSG00000085719">
    <property type="expression patterns" value="Low tissue specificity"/>
</dbReference>
<dbReference type="MIM" id="604207">
    <property type="type" value="gene"/>
</dbReference>
<dbReference type="neXtProt" id="NX_O75131"/>
<dbReference type="OpenTargets" id="ENSG00000085719"/>
<dbReference type="PharmGKB" id="PA26833"/>
<dbReference type="VEuPathDB" id="HostDB:ENSG00000085719"/>
<dbReference type="eggNOG" id="KOG1327">
    <property type="taxonomic scope" value="Eukaryota"/>
</dbReference>
<dbReference type="GeneTree" id="ENSGT00940000154968"/>
<dbReference type="HOGENOM" id="CLU_020452_3_2_1"/>
<dbReference type="InParanoid" id="O75131"/>
<dbReference type="OMA" id="EMAAQCV"/>
<dbReference type="OrthoDB" id="5855668at2759"/>
<dbReference type="PAN-GO" id="O75131">
    <property type="GO annotations" value="5 GO annotations based on evolutionary models"/>
</dbReference>
<dbReference type="PhylomeDB" id="O75131"/>
<dbReference type="TreeFam" id="TF316419"/>
<dbReference type="PathwayCommons" id="O75131"/>
<dbReference type="Reactome" id="R-HSA-1483206">
    <property type="pathway name" value="Glycerophospholipid biosynthesis"/>
</dbReference>
<dbReference type="Reactome" id="R-HSA-6798695">
    <property type="pathway name" value="Neutrophil degranulation"/>
</dbReference>
<dbReference type="SignaLink" id="O75131"/>
<dbReference type="BioGRID-ORCS" id="8895">
    <property type="hits" value="9 hits in 1158 CRISPR screens"/>
</dbReference>
<dbReference type="ChiTaRS" id="CPNE3">
    <property type="organism name" value="human"/>
</dbReference>
<dbReference type="GenomeRNAi" id="8895"/>
<dbReference type="Pharos" id="O75131">
    <property type="development level" value="Tbio"/>
</dbReference>
<dbReference type="PRO" id="PR:O75131"/>
<dbReference type="Proteomes" id="UP000005640">
    <property type="component" value="Chromosome 8"/>
</dbReference>
<dbReference type="RNAct" id="O75131">
    <property type="molecule type" value="protein"/>
</dbReference>
<dbReference type="Bgee" id="ENSG00000085719">
    <property type="expression patterns" value="Expressed in tongue squamous epithelium and 211 other cell types or tissues"/>
</dbReference>
<dbReference type="ExpressionAtlas" id="O75131">
    <property type="expression patterns" value="baseline and differential"/>
</dbReference>
<dbReference type="GO" id="GO:0035577">
    <property type="term" value="C:azurophil granule membrane"/>
    <property type="evidence" value="ECO:0000304"/>
    <property type="project" value="Reactome"/>
</dbReference>
<dbReference type="GO" id="GO:0030054">
    <property type="term" value="C:cell junction"/>
    <property type="evidence" value="ECO:0000314"/>
    <property type="project" value="UniProtKB"/>
</dbReference>
<dbReference type="GO" id="GO:0005737">
    <property type="term" value="C:cytoplasm"/>
    <property type="evidence" value="ECO:0000314"/>
    <property type="project" value="UniProtKB"/>
</dbReference>
<dbReference type="GO" id="GO:0005829">
    <property type="term" value="C:cytosol"/>
    <property type="evidence" value="ECO:0000314"/>
    <property type="project" value="UniProtKB"/>
</dbReference>
<dbReference type="GO" id="GO:0070062">
    <property type="term" value="C:extracellular exosome"/>
    <property type="evidence" value="ECO:0007005"/>
    <property type="project" value="UniProtKB"/>
</dbReference>
<dbReference type="GO" id="GO:0005925">
    <property type="term" value="C:focal adhesion"/>
    <property type="evidence" value="ECO:0000314"/>
    <property type="project" value="UniProtKB"/>
</dbReference>
<dbReference type="GO" id="GO:0005739">
    <property type="term" value="C:mitochondrion"/>
    <property type="evidence" value="ECO:0000314"/>
    <property type="project" value="HPA"/>
</dbReference>
<dbReference type="GO" id="GO:0005730">
    <property type="term" value="C:nucleolus"/>
    <property type="evidence" value="ECO:0000314"/>
    <property type="project" value="HPA"/>
</dbReference>
<dbReference type="GO" id="GO:0005654">
    <property type="term" value="C:nucleoplasm"/>
    <property type="evidence" value="ECO:0000314"/>
    <property type="project" value="HPA"/>
</dbReference>
<dbReference type="GO" id="GO:0005634">
    <property type="term" value="C:nucleus"/>
    <property type="evidence" value="ECO:0000314"/>
    <property type="project" value="UniProtKB"/>
</dbReference>
<dbReference type="GO" id="GO:0005886">
    <property type="term" value="C:plasma membrane"/>
    <property type="evidence" value="ECO:0000314"/>
    <property type="project" value="UniProtKB"/>
</dbReference>
<dbReference type="GO" id="GO:0005544">
    <property type="term" value="F:calcium-dependent phospholipid binding"/>
    <property type="evidence" value="ECO:0000314"/>
    <property type="project" value="UniProtKB"/>
</dbReference>
<dbReference type="GO" id="GO:0048306">
    <property type="term" value="F:calcium-dependent protein binding"/>
    <property type="evidence" value="ECO:0000314"/>
    <property type="project" value="UniProtKB"/>
</dbReference>
<dbReference type="GO" id="GO:0046872">
    <property type="term" value="F:metal ion binding"/>
    <property type="evidence" value="ECO:0007669"/>
    <property type="project" value="UniProtKB-KW"/>
</dbReference>
<dbReference type="GO" id="GO:0004674">
    <property type="term" value="F:protein serine/threonine kinase activity"/>
    <property type="evidence" value="ECO:0000314"/>
    <property type="project" value="UniProtKB"/>
</dbReference>
<dbReference type="GO" id="GO:0030971">
    <property type="term" value="F:receptor tyrosine kinase binding"/>
    <property type="evidence" value="ECO:0000353"/>
    <property type="project" value="UniProtKB"/>
</dbReference>
<dbReference type="GO" id="GO:0003723">
    <property type="term" value="F:RNA binding"/>
    <property type="evidence" value="ECO:0007005"/>
    <property type="project" value="UniProtKB"/>
</dbReference>
<dbReference type="GO" id="GO:0071277">
    <property type="term" value="P:cellular response to calcium ion"/>
    <property type="evidence" value="ECO:0000314"/>
    <property type="project" value="UniProtKB"/>
</dbReference>
<dbReference type="GO" id="GO:0071363">
    <property type="term" value="P:cellular response to growth factor stimulus"/>
    <property type="evidence" value="ECO:0000314"/>
    <property type="project" value="UniProtKB"/>
</dbReference>
<dbReference type="GO" id="GO:0038128">
    <property type="term" value="P:ERBB2 signaling pathway"/>
    <property type="evidence" value="ECO:0000314"/>
    <property type="project" value="UniProtKB"/>
</dbReference>
<dbReference type="GO" id="GO:0030335">
    <property type="term" value="P:positive regulation of cell migration"/>
    <property type="evidence" value="ECO:0000315"/>
    <property type="project" value="UniProtKB"/>
</dbReference>
<dbReference type="CDD" id="cd04048">
    <property type="entry name" value="C2A_Copine"/>
    <property type="match status" value="1"/>
</dbReference>
<dbReference type="CDD" id="cd04047">
    <property type="entry name" value="C2B_Copine"/>
    <property type="match status" value="1"/>
</dbReference>
<dbReference type="CDD" id="cd01459">
    <property type="entry name" value="vWA_copine_like"/>
    <property type="match status" value="1"/>
</dbReference>
<dbReference type="FunFam" id="2.60.40.150:FF:000042">
    <property type="entry name" value="Copine 3"/>
    <property type="match status" value="1"/>
</dbReference>
<dbReference type="FunFam" id="2.60.40.150:FF:000099">
    <property type="entry name" value="Copine 3"/>
    <property type="match status" value="1"/>
</dbReference>
<dbReference type="Gene3D" id="2.60.40.150">
    <property type="entry name" value="C2 domain"/>
    <property type="match status" value="2"/>
</dbReference>
<dbReference type="InterPro" id="IPR000008">
    <property type="entry name" value="C2_dom"/>
</dbReference>
<dbReference type="InterPro" id="IPR035892">
    <property type="entry name" value="C2_domain_sf"/>
</dbReference>
<dbReference type="InterPro" id="IPR037768">
    <property type="entry name" value="C2B_Copine"/>
</dbReference>
<dbReference type="InterPro" id="IPR045052">
    <property type="entry name" value="Copine"/>
</dbReference>
<dbReference type="InterPro" id="IPR010734">
    <property type="entry name" value="Copine_C"/>
</dbReference>
<dbReference type="InterPro" id="IPR002035">
    <property type="entry name" value="VWF_A"/>
</dbReference>
<dbReference type="InterPro" id="IPR036465">
    <property type="entry name" value="vWFA_dom_sf"/>
</dbReference>
<dbReference type="PANTHER" id="PTHR10857">
    <property type="entry name" value="COPINE"/>
    <property type="match status" value="1"/>
</dbReference>
<dbReference type="PANTHER" id="PTHR10857:SF22">
    <property type="entry name" value="COPINE-3"/>
    <property type="match status" value="1"/>
</dbReference>
<dbReference type="Pfam" id="PF00168">
    <property type="entry name" value="C2"/>
    <property type="match status" value="2"/>
</dbReference>
<dbReference type="Pfam" id="PF07002">
    <property type="entry name" value="Copine"/>
    <property type="match status" value="1"/>
</dbReference>
<dbReference type="SMART" id="SM00239">
    <property type="entry name" value="C2"/>
    <property type="match status" value="2"/>
</dbReference>
<dbReference type="SMART" id="SM00327">
    <property type="entry name" value="VWA"/>
    <property type="match status" value="1"/>
</dbReference>
<dbReference type="SUPFAM" id="SSF49562">
    <property type="entry name" value="C2 domain (Calcium/lipid-binding domain, CaLB)"/>
    <property type="match status" value="2"/>
</dbReference>
<dbReference type="SUPFAM" id="SSF53300">
    <property type="entry name" value="vWA-like"/>
    <property type="match status" value="1"/>
</dbReference>
<dbReference type="PROSITE" id="PS50004">
    <property type="entry name" value="C2"/>
    <property type="match status" value="2"/>
</dbReference>
<reference key="1">
    <citation type="journal article" date="2000" name="Biochemistry">
        <title>Characterization of human copine III as a phosphoprotein with associated kinase activity.</title>
        <authorList>
            <person name="Caudell E.G."/>
            <person name="Caudell J.J."/>
            <person name="Tang C.-H."/>
            <person name="Yu T.-K."/>
            <person name="Frederick M.J."/>
            <person name="Grimm E.A."/>
        </authorList>
    </citation>
    <scope>NUCLEOTIDE SEQUENCE [MRNA]</scope>
    <scope>PARTIAL PROTEIN SEQUENCE</scope>
    <scope>TISSUE SPECIFICITY</scope>
    <scope>PHOSPHORYLATION</scope>
</reference>
<reference key="2">
    <citation type="journal article" date="1998" name="DNA Res.">
        <title>Prediction of the coding sequences of unidentified human genes. X. The complete sequences of 100 new cDNA clones from brain which can code for large proteins in vitro.</title>
        <authorList>
            <person name="Ishikawa K."/>
            <person name="Nagase T."/>
            <person name="Suyama M."/>
            <person name="Miyajima N."/>
            <person name="Tanaka A."/>
            <person name="Kotani H."/>
            <person name="Nomura N."/>
            <person name="Ohara O."/>
        </authorList>
    </citation>
    <scope>NUCLEOTIDE SEQUENCE [LARGE SCALE MRNA]</scope>
    <source>
        <tissue>Brain</tissue>
    </source>
</reference>
<reference key="3">
    <citation type="journal article" date="2004" name="Nat. Genet.">
        <title>Complete sequencing and characterization of 21,243 full-length human cDNAs.</title>
        <authorList>
            <person name="Ota T."/>
            <person name="Suzuki Y."/>
            <person name="Nishikawa T."/>
            <person name="Otsuki T."/>
            <person name="Sugiyama T."/>
            <person name="Irie R."/>
            <person name="Wakamatsu A."/>
            <person name="Hayashi K."/>
            <person name="Sato H."/>
            <person name="Nagai K."/>
            <person name="Kimura K."/>
            <person name="Makita H."/>
            <person name="Sekine M."/>
            <person name="Obayashi M."/>
            <person name="Nishi T."/>
            <person name="Shibahara T."/>
            <person name="Tanaka T."/>
            <person name="Ishii S."/>
            <person name="Yamamoto J."/>
            <person name="Saito K."/>
            <person name="Kawai Y."/>
            <person name="Isono Y."/>
            <person name="Nakamura Y."/>
            <person name="Nagahari K."/>
            <person name="Murakami K."/>
            <person name="Yasuda T."/>
            <person name="Iwayanagi T."/>
            <person name="Wagatsuma M."/>
            <person name="Shiratori A."/>
            <person name="Sudo H."/>
            <person name="Hosoiri T."/>
            <person name="Kaku Y."/>
            <person name="Kodaira H."/>
            <person name="Kondo H."/>
            <person name="Sugawara M."/>
            <person name="Takahashi M."/>
            <person name="Kanda K."/>
            <person name="Yokoi T."/>
            <person name="Furuya T."/>
            <person name="Kikkawa E."/>
            <person name="Omura Y."/>
            <person name="Abe K."/>
            <person name="Kamihara K."/>
            <person name="Katsuta N."/>
            <person name="Sato K."/>
            <person name="Tanikawa M."/>
            <person name="Yamazaki M."/>
            <person name="Ninomiya K."/>
            <person name="Ishibashi T."/>
            <person name="Yamashita H."/>
            <person name="Murakawa K."/>
            <person name="Fujimori K."/>
            <person name="Tanai H."/>
            <person name="Kimata M."/>
            <person name="Watanabe M."/>
            <person name="Hiraoka S."/>
            <person name="Chiba Y."/>
            <person name="Ishida S."/>
            <person name="Ono Y."/>
            <person name="Takiguchi S."/>
            <person name="Watanabe S."/>
            <person name="Yosida M."/>
            <person name="Hotuta T."/>
            <person name="Kusano J."/>
            <person name="Kanehori K."/>
            <person name="Takahashi-Fujii A."/>
            <person name="Hara H."/>
            <person name="Tanase T.-O."/>
            <person name="Nomura Y."/>
            <person name="Togiya S."/>
            <person name="Komai F."/>
            <person name="Hara R."/>
            <person name="Takeuchi K."/>
            <person name="Arita M."/>
            <person name="Imose N."/>
            <person name="Musashino K."/>
            <person name="Yuuki H."/>
            <person name="Oshima A."/>
            <person name="Sasaki N."/>
            <person name="Aotsuka S."/>
            <person name="Yoshikawa Y."/>
            <person name="Matsunawa H."/>
            <person name="Ichihara T."/>
            <person name="Shiohata N."/>
            <person name="Sano S."/>
            <person name="Moriya S."/>
            <person name="Momiyama H."/>
            <person name="Satoh N."/>
            <person name="Takami S."/>
            <person name="Terashima Y."/>
            <person name="Suzuki O."/>
            <person name="Nakagawa S."/>
            <person name="Senoh A."/>
            <person name="Mizoguchi H."/>
            <person name="Goto Y."/>
            <person name="Shimizu F."/>
            <person name="Wakebe H."/>
            <person name="Hishigaki H."/>
            <person name="Watanabe T."/>
            <person name="Sugiyama A."/>
            <person name="Takemoto M."/>
            <person name="Kawakami B."/>
            <person name="Yamazaki M."/>
            <person name="Watanabe K."/>
            <person name="Kumagai A."/>
            <person name="Itakura S."/>
            <person name="Fukuzumi Y."/>
            <person name="Fujimori Y."/>
            <person name="Komiyama M."/>
            <person name="Tashiro H."/>
            <person name="Tanigami A."/>
            <person name="Fujiwara T."/>
            <person name="Ono T."/>
            <person name="Yamada K."/>
            <person name="Fujii Y."/>
            <person name="Ozaki K."/>
            <person name="Hirao M."/>
            <person name="Ohmori Y."/>
            <person name="Kawabata A."/>
            <person name="Hikiji T."/>
            <person name="Kobatake N."/>
            <person name="Inagaki H."/>
            <person name="Ikema Y."/>
            <person name="Okamoto S."/>
            <person name="Okitani R."/>
            <person name="Kawakami T."/>
            <person name="Noguchi S."/>
            <person name="Itoh T."/>
            <person name="Shigeta K."/>
            <person name="Senba T."/>
            <person name="Matsumura K."/>
            <person name="Nakajima Y."/>
            <person name="Mizuno T."/>
            <person name="Morinaga M."/>
            <person name="Sasaki M."/>
            <person name="Togashi T."/>
            <person name="Oyama M."/>
            <person name="Hata H."/>
            <person name="Watanabe M."/>
            <person name="Komatsu T."/>
            <person name="Mizushima-Sugano J."/>
            <person name="Satoh T."/>
            <person name="Shirai Y."/>
            <person name="Takahashi Y."/>
            <person name="Nakagawa K."/>
            <person name="Okumura K."/>
            <person name="Nagase T."/>
            <person name="Nomura N."/>
            <person name="Kikuchi H."/>
            <person name="Masuho Y."/>
            <person name="Yamashita R."/>
            <person name="Nakai K."/>
            <person name="Yada T."/>
            <person name="Nakamura Y."/>
            <person name="Ohara O."/>
            <person name="Isogai T."/>
            <person name="Sugano S."/>
        </authorList>
    </citation>
    <scope>NUCLEOTIDE SEQUENCE [LARGE SCALE MRNA]</scope>
    <scope>VARIANT MET-412</scope>
    <source>
        <tissue>Trachea</tissue>
    </source>
</reference>
<reference key="4">
    <citation type="journal article" date="2004" name="Genome Res.">
        <title>The status, quality, and expansion of the NIH full-length cDNA project: the Mammalian Gene Collection (MGC).</title>
        <authorList>
            <consortium name="The MGC Project Team"/>
        </authorList>
    </citation>
    <scope>NUCLEOTIDE SEQUENCE [LARGE SCALE MRNA]</scope>
    <source>
        <tissue>Brain</tissue>
        <tissue>Skin</tissue>
    </source>
</reference>
<reference key="5">
    <citation type="journal article" date="2003" name="J. Leukoc. Biol.">
        <title>Tissue expression of copines and isolation of copines I and III from the cytosol of human neutrophils.</title>
        <authorList>
            <person name="Cowland J.B."/>
            <person name="Carter D."/>
            <person name="Bjerregaard M.D."/>
            <person name="Johnsen A.H."/>
            <person name="Borregaard N."/>
            <person name="Lollike K."/>
        </authorList>
    </citation>
    <scope>SUBUNIT</scope>
    <scope>SUBCELLULAR LOCATION</scope>
    <scope>TISSUE SPECIFICITY</scope>
    <scope>MASS SPECTROMETRY</scope>
</reference>
<reference key="6">
    <citation type="journal article" date="2008" name="Proc. Natl. Acad. Sci. U.S.A.">
        <title>A quantitative atlas of mitotic phosphorylation.</title>
        <authorList>
            <person name="Dephoure N."/>
            <person name="Zhou C."/>
            <person name="Villen J."/>
            <person name="Beausoleil S.A."/>
            <person name="Bakalarski C.E."/>
            <person name="Elledge S.J."/>
            <person name="Gygi S.P."/>
        </authorList>
    </citation>
    <scope>IDENTIFICATION BY MASS SPECTROMETRY [LARGE SCALE ANALYSIS]</scope>
    <source>
        <tissue>Cervix carcinoma</tissue>
    </source>
</reference>
<reference key="7">
    <citation type="journal article" date="2010" name="FEBS J.">
        <title>Copines-1, -2, -3, -6 and -7 show different calcium-dependent intracellular membrane translocation and targeting.</title>
        <authorList>
            <person name="Perestenko P.V."/>
            <person name="Pooler A.M."/>
            <person name="Noorbakhshnia M."/>
            <person name="Gray A."/>
            <person name="Bauccio C."/>
            <person name="Jeffrey McIlhinney R.A."/>
        </authorList>
    </citation>
    <scope>SUBCELLULAR LOCATION</scope>
</reference>
<reference key="8">
    <citation type="journal article" date="2010" name="Oncogene">
        <title>Copine-III interacts with ErbB2 and promotes tumor cell migration.</title>
        <authorList>
            <person name="Heinrich C."/>
            <person name="Keller C."/>
            <person name="Boulay A."/>
            <person name="Vecchi M."/>
            <person name="Bianchi M."/>
            <person name="Sack R."/>
            <person name="Lienhard S."/>
            <person name="Duss S."/>
            <person name="Hofsteenge J."/>
            <person name="Hynes N.E."/>
        </authorList>
    </citation>
    <scope>FUNCTION</scope>
    <scope>INTERACTION WITH ERBB2; RACK1 AND SHC1</scope>
    <scope>SUBCELLULAR LOCATION</scope>
    <scope>IDENTIFICATION BY MASS SPECTROMETRY</scope>
</reference>
<reference key="9">
    <citation type="journal article" date="2011" name="BMC Syst. Biol.">
        <title>Initial characterization of the human central proteome.</title>
        <authorList>
            <person name="Burkard T.R."/>
            <person name="Planyavsky M."/>
            <person name="Kaupe I."/>
            <person name="Breitwieser F.P."/>
            <person name="Buerckstuemmer T."/>
            <person name="Bennett K.L."/>
            <person name="Superti-Furga G."/>
            <person name="Colinge J."/>
        </authorList>
    </citation>
    <scope>IDENTIFICATION BY MASS SPECTROMETRY [LARGE SCALE ANALYSIS]</scope>
</reference>
<reference key="10">
    <citation type="journal article" date="2013" name="J. Proteome Res.">
        <title>Toward a comprehensive characterization of a human cancer cell phosphoproteome.</title>
        <authorList>
            <person name="Zhou H."/>
            <person name="Di Palma S."/>
            <person name="Preisinger C."/>
            <person name="Peng M."/>
            <person name="Polat A.N."/>
            <person name="Heck A.J."/>
            <person name="Mohammed S."/>
        </authorList>
    </citation>
    <scope>PHOSPHORYLATION [LARGE SCALE ANALYSIS] AT SER-14 AND SER-243</scope>
    <scope>IDENTIFICATION BY MASS SPECTROMETRY [LARGE SCALE ANALYSIS]</scope>
    <source>
        <tissue>Cervix carcinoma</tissue>
        <tissue>Erythroleukemia</tissue>
    </source>
</reference>
<reference key="11">
    <citation type="journal article" date="2014" name="J. Proteomics">
        <title>An enzyme assisted RP-RPLC approach for in-depth analysis of human liver phosphoproteome.</title>
        <authorList>
            <person name="Bian Y."/>
            <person name="Song C."/>
            <person name="Cheng K."/>
            <person name="Dong M."/>
            <person name="Wang F."/>
            <person name="Huang J."/>
            <person name="Sun D."/>
            <person name="Wang L."/>
            <person name="Ye M."/>
            <person name="Zou H."/>
        </authorList>
    </citation>
    <scope>PHOSPHORYLATION [LARGE SCALE ANALYSIS] AT SER-14 AND SER-197</scope>
    <scope>IDENTIFICATION BY MASS SPECTROMETRY [LARGE SCALE ANALYSIS]</scope>
    <source>
        <tissue>Liver</tissue>
    </source>
</reference>
<accession>O75131</accession>
<accession>A8KA47</accession>
<accession>Q8IYA1</accession>
<name>CPNE3_HUMAN</name>
<protein>
    <recommendedName>
        <fullName evidence="10">Copine-3</fullName>
    </recommendedName>
    <alternativeName>
        <fullName evidence="8 12">Copine III</fullName>
    </alternativeName>
</protein>
<proteinExistence type="evidence at protein level"/>
<evidence type="ECO:0000255" key="1">
    <source>
        <dbReference type="PROSITE-ProRule" id="PRU00041"/>
    </source>
</evidence>
<evidence type="ECO:0000255" key="2">
    <source>
        <dbReference type="PROSITE-ProRule" id="PRU00219"/>
    </source>
</evidence>
<evidence type="ECO:0000269" key="3">
    <source>
    </source>
</evidence>
<evidence type="ECO:0000269" key="4">
    <source>
    </source>
</evidence>
<evidence type="ECO:0000269" key="5">
    <source>
    </source>
</evidence>
<evidence type="ECO:0000269" key="6">
    <source>
    </source>
</evidence>
<evidence type="ECO:0000269" key="7">
    <source>
    </source>
</evidence>
<evidence type="ECO:0000303" key="8">
    <source>
    </source>
</evidence>
<evidence type="ECO:0000303" key="9">
    <source>
    </source>
</evidence>
<evidence type="ECO:0000305" key="10"/>
<evidence type="ECO:0000305" key="11">
    <source>
    </source>
</evidence>
<evidence type="ECO:0000312" key="12">
    <source>
        <dbReference type="HGNC" id="HGNC:2316"/>
    </source>
</evidence>
<evidence type="ECO:0007744" key="13">
    <source>
    </source>
</evidence>
<evidence type="ECO:0007744" key="14">
    <source>
    </source>
</evidence>
<feature type="chain" id="PRO_0000144838" description="Copine-3">
    <location>
        <begin position="1"/>
        <end position="537"/>
    </location>
</feature>
<feature type="domain" description="C2 1" evidence="1">
    <location>
        <begin position="1"/>
        <end position="115"/>
    </location>
</feature>
<feature type="domain" description="C2 2" evidence="1">
    <location>
        <begin position="124"/>
        <end position="247"/>
    </location>
</feature>
<feature type="domain" description="VWFA" evidence="2">
    <location>
        <begin position="291"/>
        <end position="513"/>
    </location>
</feature>
<feature type="binding site" evidence="1">
    <location>
        <position position="22"/>
    </location>
    <ligand>
        <name>Ca(2+)</name>
        <dbReference type="ChEBI" id="CHEBI:29108"/>
        <label>1</label>
    </ligand>
</feature>
<feature type="binding site" evidence="1">
    <location>
        <position position="22"/>
    </location>
    <ligand>
        <name>Ca(2+)</name>
        <dbReference type="ChEBI" id="CHEBI:29108"/>
        <label>2</label>
    </ligand>
</feature>
<feature type="binding site" evidence="1">
    <location>
        <position position="28"/>
    </location>
    <ligand>
        <name>Ca(2+)</name>
        <dbReference type="ChEBI" id="CHEBI:29108"/>
        <label>1</label>
    </ligand>
</feature>
<feature type="binding site" evidence="1">
    <location>
        <position position="81"/>
    </location>
    <ligand>
        <name>Ca(2+)</name>
        <dbReference type="ChEBI" id="CHEBI:29108"/>
        <label>1</label>
    </ligand>
</feature>
<feature type="binding site" evidence="1">
    <location>
        <position position="81"/>
    </location>
    <ligand>
        <name>Ca(2+)</name>
        <dbReference type="ChEBI" id="CHEBI:29108"/>
        <label>2</label>
    </ligand>
</feature>
<feature type="binding site" evidence="1">
    <location>
        <position position="83"/>
    </location>
    <ligand>
        <name>Ca(2+)</name>
        <dbReference type="ChEBI" id="CHEBI:29108"/>
        <label>1</label>
    </ligand>
</feature>
<feature type="binding site" evidence="1">
    <location>
        <position position="83"/>
    </location>
    <ligand>
        <name>Ca(2+)</name>
        <dbReference type="ChEBI" id="CHEBI:29108"/>
        <label>2</label>
    </ligand>
</feature>
<feature type="binding site" evidence="1">
    <location>
        <position position="93"/>
    </location>
    <ligand>
        <name>Ca(2+)</name>
        <dbReference type="ChEBI" id="CHEBI:29108"/>
        <label>2</label>
    </ligand>
</feature>
<feature type="binding site" evidence="1">
    <location>
        <position position="154"/>
    </location>
    <ligand>
        <name>Ca(2+)</name>
        <dbReference type="ChEBI" id="CHEBI:29108"/>
        <label>3</label>
    </ligand>
</feature>
<feature type="binding site" evidence="1">
    <location>
        <position position="154"/>
    </location>
    <ligand>
        <name>Ca(2+)</name>
        <dbReference type="ChEBI" id="CHEBI:29108"/>
        <label>4</label>
    </ligand>
</feature>
<feature type="binding site" evidence="1">
    <location>
        <position position="160"/>
    </location>
    <ligand>
        <name>Ca(2+)</name>
        <dbReference type="ChEBI" id="CHEBI:29108"/>
        <label>3</label>
    </ligand>
</feature>
<feature type="binding site" evidence="1">
    <location>
        <position position="216"/>
    </location>
    <ligand>
        <name>Ca(2+)</name>
        <dbReference type="ChEBI" id="CHEBI:29108"/>
        <label>3</label>
    </ligand>
</feature>
<feature type="binding site" evidence="1">
    <location>
        <position position="216"/>
    </location>
    <ligand>
        <name>Ca(2+)</name>
        <dbReference type="ChEBI" id="CHEBI:29108"/>
        <label>4</label>
    </ligand>
</feature>
<feature type="binding site" evidence="1">
    <location>
        <position position="218"/>
    </location>
    <ligand>
        <name>Ca(2+)</name>
        <dbReference type="ChEBI" id="CHEBI:29108"/>
        <label>3</label>
    </ligand>
</feature>
<feature type="binding site" evidence="1">
    <location>
        <position position="218"/>
    </location>
    <ligand>
        <name>Ca(2+)</name>
        <dbReference type="ChEBI" id="CHEBI:29108"/>
        <label>4</label>
    </ligand>
</feature>
<feature type="binding site" evidence="1">
    <location>
        <position position="224"/>
    </location>
    <ligand>
        <name>Ca(2+)</name>
        <dbReference type="ChEBI" id="CHEBI:29108"/>
        <label>4</label>
    </ligand>
</feature>
<feature type="modified residue" description="Phosphoserine" evidence="13 14">
    <location>
        <position position="14"/>
    </location>
</feature>
<feature type="modified residue" description="Phosphoserine" evidence="14">
    <location>
        <position position="197"/>
    </location>
</feature>
<feature type="modified residue" description="Phosphoserine" evidence="13">
    <location>
        <position position="243"/>
    </location>
</feature>
<feature type="sequence variant" id="VAR_048848" description="In dbSNP:rs41333046.">
    <original>E</original>
    <variation>D</variation>
    <location>
        <position position="252"/>
    </location>
</feature>
<feature type="sequence variant" id="VAR_024424" description="In dbSNP:rs2304789." evidence="5">
    <original>T</original>
    <variation>M</variation>
    <location>
        <position position="412"/>
    </location>
</feature>
<feature type="sequence conflict" description="In Ref. 4; AAH36242." evidence="10" ref="4">
    <original>P</original>
    <variation>Q</variation>
    <location>
        <position position="394"/>
    </location>
</feature>
<feature type="sequence conflict" description="In Ref. 4; AAH36242." evidence="10" ref="4">
    <original>Q</original>
    <variation>R</variation>
    <location>
        <position position="419"/>
    </location>
</feature>
<feature type="sequence conflict" description="In Ref. 4; AAH36242." evidence="10" ref="4">
    <original>R</original>
    <variation>H</variation>
    <location>
        <position position="475"/>
    </location>
</feature>
<gene>
    <name evidence="12" type="primary">CPNE3</name>
    <name type="synonym">CPN3</name>
    <name evidence="9" type="synonym">KIAA0636</name>
</gene>
<keyword id="KW-0106">Calcium</keyword>
<keyword id="KW-0965">Cell junction</keyword>
<keyword id="KW-1003">Cell membrane</keyword>
<keyword id="KW-0963">Cytoplasm</keyword>
<keyword id="KW-0903">Direct protein sequencing</keyword>
<keyword id="KW-0472">Membrane</keyword>
<keyword id="KW-0479">Metal-binding</keyword>
<keyword id="KW-0539">Nucleus</keyword>
<keyword id="KW-0597">Phosphoprotein</keyword>
<keyword id="KW-1267">Proteomics identification</keyword>
<keyword id="KW-1185">Reference proteome</keyword>
<keyword id="KW-0677">Repeat</keyword>
<comment type="function">
    <text evidence="6">Calcium-dependent phospholipid-binding protein that plays a role in ERBB2-mediated tumor cell migration in response to growth factor heregulin stimulation (PubMed:20010870).</text>
</comment>
<comment type="cofactor">
    <cofactor evidence="1">
        <name>Ca(2+)</name>
        <dbReference type="ChEBI" id="CHEBI:29108"/>
    </cofactor>
</comment>
<comment type="subunit">
    <text evidence="4 6">Monomer (PubMed:12949241). Interacts with ERBB2 (preferentially with the tyrosine phosphorylated form); this interaction occurs at the cell membrane and is increased in a growth factor heregulin-dependent manner (PubMed:20010870). Interacts with SHC1; this interaction may mediate the binding of CPNE3 with ERBB2 (PubMed:20010870). Interacts with RACK1 (PubMed:20010870).</text>
</comment>
<comment type="interaction">
    <interactant intactId="EBI-718988">
        <id>O75131</id>
    </interactant>
    <interactant intactId="EBI-717399">
        <id>Q9BSI4</id>
        <label>TINF2</label>
    </interactant>
    <organismsDiffer>false</organismsDiffer>
    <experiments>2</experiments>
</comment>
<comment type="subcellular location">
    <subcellularLocation>
        <location evidence="6 7">Nucleus</location>
    </subcellularLocation>
    <subcellularLocation>
        <location evidence="4 6 7">Cytoplasm</location>
    </subcellularLocation>
    <subcellularLocation>
        <location evidence="6 7">Cell membrane</location>
    </subcellularLocation>
    <subcellularLocation>
        <location evidence="6">Cell junction</location>
    </subcellularLocation>
    <subcellularLocation>
        <location evidence="6">Cell junction</location>
        <location evidence="6">Focal adhesion</location>
    </subcellularLocation>
    <text evidence="6 7">Associates to the membrane in a calcium-dependent manner (PubMed:20010870). Translocates to the cell membrane and the nucleus in a calcium- or growth factor heregulin-dependent manner (PubMed:20010870, PubMed:21087455). Colocalizes with the tyrosine phosphorylated ERBB2 form at cell membrane and focal adhesions in a calcium- or growth factor heregulin-dependent manner (PubMed:20010870).</text>
</comment>
<comment type="tissue specificity">
    <text evidence="3 4 6">Expressed in breast and weakly in prostate and ovarian tissues (PubMed:20010870). Expressed in neutrophils (at protein level) (PubMed:12949241). Widely expressed (PubMed:11041869). Expressed in the brain. Expressed in neutrophil precursors from the bone marrow and peripheral blood (PubMed:12949241). Expressed in primary breast tumors and ovarian endometrioid adenocarcinoma (PubMed:20010870).</text>
</comment>
<comment type="PTM">
    <text evidence="3">Phosphorylated on serine and threonine residues (PubMed:11041869).</text>
</comment>
<comment type="similarity">
    <text evidence="10">Belongs to the copine family.</text>
</comment>
<comment type="caution">
    <text evidence="11">Was reported to have a protein kinase activity.</text>
</comment>
<comment type="sequence caution" evidence="10">
    <conflict type="erroneous initiation">
        <sequence resource="EMBL-CDS" id="BAA31611"/>
    </conflict>
</comment>
<organism>
    <name type="scientific">Homo sapiens</name>
    <name type="common">Human</name>
    <dbReference type="NCBI Taxonomy" id="9606"/>
    <lineage>
        <taxon>Eukaryota</taxon>
        <taxon>Metazoa</taxon>
        <taxon>Chordata</taxon>
        <taxon>Craniata</taxon>
        <taxon>Vertebrata</taxon>
        <taxon>Euteleostomi</taxon>
        <taxon>Mammalia</taxon>
        <taxon>Eutheria</taxon>
        <taxon>Euarchontoglires</taxon>
        <taxon>Primates</taxon>
        <taxon>Haplorrhini</taxon>
        <taxon>Catarrhini</taxon>
        <taxon>Hominidae</taxon>
        <taxon>Homo</taxon>
    </lineage>
</organism>
<sequence>MAAQCVTKVALNVSCANLLDKDIGSKSDPLCVLFLNTSGQQWYEVERTERIKNCLNPQFSKTFIIDYYFEVVQKLKFGVYDIDNKTIELSDDDFLGECECTLGQIVSSKKLTRPLVMKTGRPAGKGSITISAEEIKDNRVVLFEMEARKLDNKDLFGKSDPYLEFHKQTSDGNWLMVHRTEVVKNNLNPVWRPFKISLNSLCYGDMDKTIKVECYDYDNDGSHDLIGTFQTTMTKLKEASRSSPVEFECINEKKRQKKKSYKNSGVISVKQCEITVECTFLDYIMGGCQLNFTVGVDFTGSNGDPRSPDSLHYISPNGVNEYLTALWSVGLVIQDYDADKMFPAFGFGAQIPPQWQVSHEFPMNFNPSNPYCNGIQGIVEAYRSCLPQIKLYGPTNFSPIINHVARFAAAATQQQTASQYFVLLIITDGVITDLDETRQAIVNASRLPMSIIIVGVGGADFSAMEFLDGDGGSLRSPLGEVAIRDIVQFVPFRQFQNAPKEALAQCVLAEIPQQVVGYFNTYKLLPPKNPATKQQKQ</sequence>